<proteinExistence type="inferred from homology"/>
<accession>Q5AS50</accession>
<accession>C8VLU2</accession>
<comment type="function">
    <text evidence="1">Functions as a sorting receptor in the Golgi compartment required for the intracellular sorting and delivery of soluble vacuolar proteins, like carboxypeptidase Y (CPY) and proteinase A. Executes multiple rounds of sorting by cycling between the late Golgi and a prevacuolar endosome-like compartment (By similarity).</text>
</comment>
<comment type="subcellular location">
    <subcellularLocation>
        <location evidence="3">Golgi apparatus</location>
        <location evidence="3">trans-Golgi network membrane</location>
        <topology evidence="3">Multi-pass membrane protein</topology>
    </subcellularLocation>
    <subcellularLocation>
        <location evidence="3">Prevacuolar compartment membrane</location>
        <topology evidence="3">Multi-pass membrane protein</topology>
    </subcellularLocation>
    <text>Cycles between the Golgi apparatus and the prevacuolar compartment.</text>
</comment>
<comment type="similarity">
    <text evidence="4">Belongs to the VPS10-related sortilin family.</text>
</comment>
<comment type="sequence caution" evidence="4">
    <conflict type="erroneous gene model prediction">
        <sequence resource="EMBL-CDS" id="EAA64094"/>
    </conflict>
</comment>
<sequence>MIPRWIQLVGCLLLALMLPPSAAKKDKPGISFHKLHEKPYSMFYFEKSDTVLLNLEDGEVLRSFDAGENWEVIEDNGMKHGVTSIHQHPFDEDKAYALGDDGKHWITTDKAKTWKSFKVPDQAYFKSPQTGPLTFHGRDSSKVIFETRPCPSCAPRSYYTTDDFDTIEVLTESAVGCYWAVGNPQFAAGPNMPKGMEERTVCVVPGLKASSRFAFRLVYSDDYFRSQGIETKLQDGRPVSGVTSIAQVKSFIVAAVESQGTTERALYVTTDIEKWHRAEFGDHRLEQDAYTVLESSDYSLQVDVLTNPFSGMGVLFTSNSDGTYFTRNIEHTNRGPRGYVDFEKLAAIQGIVLVNTVRNPDDVEAGASKEVVSQISFDDGRTFQPLKSTDGQRIHLHSVNSDTNLGRVFSSPAPGLVMGVGNTGDYLGKRSDGHLYVSDDAGLTWRLALKGPHKYEFGDQGAVLVAISEAPKVKKIEYSLDHGKEWKSVDLPHEVDGETSTLTTTPDSTSLKFILLGHSKGEPSVYAIDFEDLHERKCEDEDFDNHWPARLDEHGEPDCLMGQKQFFRRRKANADCFVAEAFNSSMSKFEPCKCTVEDFECQSTRTEDGKDCVPPKSFTPPDGDCINPDDTTMIPSGWRLIPGDVCVRDDGVNLDKDVEIPCKDVNNRPKSKEITSTMKMFSSGLSAYRYLERQVSNLGEDETVLMLSRNQELFVSHDHGQTWQQELKGASIMKIVPHPYNSDTAYILTDSEEVFYTINRGATFGSFRAKTLPDYENGPILRFHPLKRDWLLWVGTECDSGSCHSNAYFSDDRGDSWKTILRHAKKCEFEYKENRPDSLYLVFCEQYENEDDKKRLQLMSTTDERFSDWETVEENLVEYATRAEYIILASHTDKDNALKARVSVDGTTFADLKFPPNVVPAQNLYTLVDASEHAIFLNGTTYVLSLDAVNQNDWGYVDFERMQALEGVIIANIVSNVDELSDGAPKRLRTMITHNDGGEWTLLAPPTKDANGKKFPCSVVEGKGTEDCALHLHGYTERADPRDTFSSGSAIGLMMGLGNVGDRLTSKDEADTFLTMDGGITWKSVKKGRYMWEYGDSGSVIVIVSEQKSTKVLHYSTDEGATWQDYYFSDEEIEVIDISTVPSDTSKKFILWGKKSDELVTVNVDFSGLYDRDCEFDDKGGDVSDDYQLWTPKHPFQEENSDYECDYNYERQNDGTCKLVPGLKPHDPVGYCKAHPDAIEYFEPTGYRRIPQTTCQGGYNLDHQTAKPCPGKQQEYDKKHGISGIGLFFAIVAPIAVAGAVGYYIYTKWDGKFGQIRLGETSTGTQGILSRDSLLVTVPIAIIAGIVAVAKALPLLVTSLWRSASGYMRVGNRSYPRPYASRASFAARRGDYSSVVEDEDELLGVVDFDGDEEEDS</sequence>
<name>VPS10_EMENI</name>
<evidence type="ECO:0000250" key="1"/>
<evidence type="ECO:0000255" key="2"/>
<evidence type="ECO:0000269" key="3">
    <source>
    </source>
</evidence>
<evidence type="ECO:0000305" key="4"/>
<dbReference type="EMBL" id="AACD01000164">
    <property type="protein sequence ID" value="EAA64094.1"/>
    <property type="status" value="ALT_SEQ"/>
    <property type="molecule type" value="Genomic_DNA"/>
</dbReference>
<dbReference type="EMBL" id="BN001307">
    <property type="protein sequence ID" value="CBF84749.1"/>
    <property type="molecule type" value="Genomic_DNA"/>
</dbReference>
<dbReference type="RefSeq" id="XP_682149.1">
    <property type="nucleotide sequence ID" value="XM_677057.1"/>
</dbReference>
<dbReference type="SMR" id="Q5AS50"/>
<dbReference type="FunCoup" id="Q5AS50">
    <property type="interactions" value="192"/>
</dbReference>
<dbReference type="STRING" id="227321.Q5AS50"/>
<dbReference type="GlyCosmos" id="Q5AS50">
    <property type="glycosylation" value="3 sites, No reported glycans"/>
</dbReference>
<dbReference type="eggNOG" id="KOG3511">
    <property type="taxonomic scope" value="Eukaryota"/>
</dbReference>
<dbReference type="HOGENOM" id="CLU_000700_0_0_1"/>
<dbReference type="InParanoid" id="Q5AS50"/>
<dbReference type="Proteomes" id="UP000000560">
    <property type="component" value="Chromosome VII"/>
</dbReference>
<dbReference type="GO" id="GO:0005829">
    <property type="term" value="C:cytosol"/>
    <property type="evidence" value="ECO:0007669"/>
    <property type="project" value="GOC"/>
</dbReference>
<dbReference type="GO" id="GO:0005794">
    <property type="term" value="C:Golgi apparatus"/>
    <property type="evidence" value="ECO:0000318"/>
    <property type="project" value="GO_Central"/>
</dbReference>
<dbReference type="GO" id="GO:0016020">
    <property type="term" value="C:membrane"/>
    <property type="evidence" value="ECO:0000318"/>
    <property type="project" value="GO_Central"/>
</dbReference>
<dbReference type="GO" id="GO:0006895">
    <property type="term" value="P:Golgi to endosome transport"/>
    <property type="evidence" value="ECO:0000318"/>
    <property type="project" value="GO_Central"/>
</dbReference>
<dbReference type="GO" id="GO:0006896">
    <property type="term" value="P:Golgi to vacuole transport"/>
    <property type="evidence" value="ECO:0000318"/>
    <property type="project" value="GO_Central"/>
</dbReference>
<dbReference type="GO" id="GO:0006623">
    <property type="term" value="P:protein targeting to vacuole"/>
    <property type="evidence" value="ECO:0000318"/>
    <property type="project" value="GO_Central"/>
</dbReference>
<dbReference type="CDD" id="cd15482">
    <property type="entry name" value="Sialidase_non-viral"/>
    <property type="match status" value="1"/>
</dbReference>
<dbReference type="FunFam" id="2.130.10.10:FF:000676">
    <property type="entry name" value="Sortilin"/>
    <property type="match status" value="1"/>
</dbReference>
<dbReference type="FunFam" id="3.30.60.270:FF:000005">
    <property type="entry name" value="Sortilin"/>
    <property type="match status" value="1"/>
</dbReference>
<dbReference type="FunFam" id="2.10.70.80:FF:000001">
    <property type="entry name" value="Sortilin-related VPS10 domain-containing receptor 1"/>
    <property type="match status" value="1"/>
</dbReference>
<dbReference type="Gene3D" id="2.10.70.80">
    <property type="match status" value="1"/>
</dbReference>
<dbReference type="Gene3D" id="2.120.10.10">
    <property type="match status" value="1"/>
</dbReference>
<dbReference type="Gene3D" id="3.30.60.270">
    <property type="match status" value="2"/>
</dbReference>
<dbReference type="Gene3D" id="2.130.10.10">
    <property type="entry name" value="YVTN repeat-like/Quinoprotein amine dehydrogenase"/>
    <property type="match status" value="2"/>
</dbReference>
<dbReference type="InterPro" id="IPR036278">
    <property type="entry name" value="Sialidase_sf"/>
</dbReference>
<dbReference type="InterPro" id="IPR031777">
    <property type="entry name" value="Sortilin_C"/>
</dbReference>
<dbReference type="InterPro" id="IPR031778">
    <property type="entry name" value="Sortilin_N"/>
</dbReference>
<dbReference type="InterPro" id="IPR006581">
    <property type="entry name" value="VPS10"/>
</dbReference>
<dbReference type="InterPro" id="IPR050310">
    <property type="entry name" value="VPS10-sortilin"/>
</dbReference>
<dbReference type="InterPro" id="IPR015943">
    <property type="entry name" value="WD40/YVTN_repeat-like_dom_sf"/>
</dbReference>
<dbReference type="PANTHER" id="PTHR12106">
    <property type="entry name" value="SORTILIN RELATED"/>
    <property type="match status" value="1"/>
</dbReference>
<dbReference type="PANTHER" id="PTHR12106:SF27">
    <property type="entry name" value="SORTILIN-RELATED RECEPTOR"/>
    <property type="match status" value="1"/>
</dbReference>
<dbReference type="Pfam" id="PF15902">
    <property type="entry name" value="Sortilin-Vps10"/>
    <property type="match status" value="2"/>
</dbReference>
<dbReference type="Pfam" id="PF15901">
    <property type="entry name" value="Sortilin_C"/>
    <property type="match status" value="3"/>
</dbReference>
<dbReference type="SMART" id="SM00602">
    <property type="entry name" value="VPS10"/>
    <property type="match status" value="2"/>
</dbReference>
<dbReference type="SUPFAM" id="SSF110296">
    <property type="entry name" value="Oligoxyloglucan reducing end-specific cellobiohydrolase"/>
    <property type="match status" value="1"/>
</dbReference>
<dbReference type="SUPFAM" id="SSF50939">
    <property type="entry name" value="Sialidases"/>
    <property type="match status" value="1"/>
</dbReference>
<feature type="signal peptide" evidence="2">
    <location>
        <begin position="1"/>
        <end position="23"/>
    </location>
</feature>
<feature type="chain" id="PRO_0000407518" description="Vacuolar protein sorting/targeting protein 10">
    <location>
        <begin position="24"/>
        <end position="1416"/>
    </location>
</feature>
<feature type="topological domain" description="Lumenal" evidence="2">
    <location>
        <begin position="24"/>
        <end position="1284"/>
    </location>
</feature>
<feature type="transmembrane region" description="Helical" evidence="2">
    <location>
        <begin position="1285"/>
        <end position="1305"/>
    </location>
</feature>
<feature type="topological domain" description="Cytoplasmic" evidence="2">
    <location>
        <begin position="1306"/>
        <end position="1333"/>
    </location>
</feature>
<feature type="transmembrane region" description="Helical" evidence="2">
    <location>
        <begin position="1334"/>
        <end position="1354"/>
    </location>
</feature>
<feature type="topological domain" description="Lumenal" evidence="2">
    <location>
        <begin position="1355"/>
        <end position="1416"/>
    </location>
</feature>
<feature type="repeat" description="BNR 1">
    <location>
        <begin position="62"/>
        <end position="71"/>
    </location>
</feature>
<feature type="repeat" description="BNR 2">
    <location>
        <begin position="374"/>
        <end position="384"/>
    </location>
</feature>
<feature type="repeat" description="BNR 3">
    <location>
        <begin position="436"/>
        <end position="446"/>
    </location>
</feature>
<feature type="repeat" description="BNR 4">
    <location>
        <begin position="478"/>
        <end position="487"/>
    </location>
</feature>
<feature type="repeat" description="BNR 5">
    <location>
        <begin position="714"/>
        <end position="724"/>
    </location>
</feature>
<feature type="repeat" description="BNR 6">
    <location>
        <begin position="808"/>
        <end position="818"/>
    </location>
</feature>
<feature type="repeat" description="BNR 7">
    <location>
        <begin position="1077"/>
        <end position="1083"/>
    </location>
</feature>
<feature type="repeat" description="BNR 8">
    <location>
        <begin position="1115"/>
        <end position="1124"/>
    </location>
</feature>
<feature type="glycosylation site" description="N-linked (GlcNAc...) asparagine" evidence="2">
    <location>
        <position position="583"/>
    </location>
</feature>
<feature type="glycosylation site" description="N-linked (GlcNAc...) asparagine" evidence="2">
    <location>
        <position position="938"/>
    </location>
</feature>
<feature type="glycosylation site" description="N-linked (GlcNAc...) asparagine" evidence="2">
    <location>
        <position position="1372"/>
    </location>
</feature>
<reference key="1">
    <citation type="journal article" date="2005" name="Nature">
        <title>Sequencing of Aspergillus nidulans and comparative analysis with A. fumigatus and A. oryzae.</title>
        <authorList>
            <person name="Galagan J.E."/>
            <person name="Calvo S.E."/>
            <person name="Cuomo C."/>
            <person name="Ma L.-J."/>
            <person name="Wortman J.R."/>
            <person name="Batzoglou S."/>
            <person name="Lee S.-I."/>
            <person name="Bastuerkmen M."/>
            <person name="Spevak C.C."/>
            <person name="Clutterbuck J."/>
            <person name="Kapitonov V."/>
            <person name="Jurka J."/>
            <person name="Scazzocchio C."/>
            <person name="Farman M.L."/>
            <person name="Butler J."/>
            <person name="Purcell S."/>
            <person name="Harris S."/>
            <person name="Braus G.H."/>
            <person name="Draht O."/>
            <person name="Busch S."/>
            <person name="D'Enfert C."/>
            <person name="Bouchier C."/>
            <person name="Goldman G.H."/>
            <person name="Bell-Pedersen D."/>
            <person name="Griffiths-Jones S."/>
            <person name="Doonan J.H."/>
            <person name="Yu J."/>
            <person name="Vienken K."/>
            <person name="Pain A."/>
            <person name="Freitag M."/>
            <person name="Selker E.U."/>
            <person name="Archer D.B."/>
            <person name="Penalva M.A."/>
            <person name="Oakley B.R."/>
            <person name="Momany M."/>
            <person name="Tanaka T."/>
            <person name="Kumagai T."/>
            <person name="Asai K."/>
            <person name="Machida M."/>
            <person name="Nierman W.C."/>
            <person name="Denning D.W."/>
            <person name="Caddick M.X."/>
            <person name="Hynes M."/>
            <person name="Paoletti M."/>
            <person name="Fischer R."/>
            <person name="Miller B.L."/>
            <person name="Dyer P.S."/>
            <person name="Sachs M.S."/>
            <person name="Osmani S.A."/>
            <person name="Birren B.W."/>
        </authorList>
    </citation>
    <scope>NUCLEOTIDE SEQUENCE [LARGE SCALE GENOMIC DNA]</scope>
    <source>
        <strain>FGSC A4 / ATCC 38163 / CBS 112.46 / NRRL 194 / M139</strain>
    </source>
</reference>
<reference key="2">
    <citation type="journal article" date="2009" name="Fungal Genet. Biol.">
        <title>The 2008 update of the Aspergillus nidulans genome annotation: a community effort.</title>
        <authorList>
            <person name="Wortman J.R."/>
            <person name="Gilsenan J.M."/>
            <person name="Joardar V."/>
            <person name="Deegan J."/>
            <person name="Clutterbuck J."/>
            <person name="Andersen M.R."/>
            <person name="Archer D."/>
            <person name="Bencina M."/>
            <person name="Braus G."/>
            <person name="Coutinho P."/>
            <person name="von Dohren H."/>
            <person name="Doonan J."/>
            <person name="Driessen A.J."/>
            <person name="Durek P."/>
            <person name="Espeso E."/>
            <person name="Fekete E."/>
            <person name="Flipphi M."/>
            <person name="Estrada C.G."/>
            <person name="Geysens S."/>
            <person name="Goldman G."/>
            <person name="de Groot P.W."/>
            <person name="Hansen K."/>
            <person name="Harris S.D."/>
            <person name="Heinekamp T."/>
            <person name="Helmstaedt K."/>
            <person name="Henrissat B."/>
            <person name="Hofmann G."/>
            <person name="Homan T."/>
            <person name="Horio T."/>
            <person name="Horiuchi H."/>
            <person name="James S."/>
            <person name="Jones M."/>
            <person name="Karaffa L."/>
            <person name="Karanyi Z."/>
            <person name="Kato M."/>
            <person name="Keller N."/>
            <person name="Kelly D.E."/>
            <person name="Kiel J.A."/>
            <person name="Kim J.M."/>
            <person name="van der Klei I.J."/>
            <person name="Klis F.M."/>
            <person name="Kovalchuk A."/>
            <person name="Krasevec N."/>
            <person name="Kubicek C.P."/>
            <person name="Liu B."/>
            <person name="Maccabe A."/>
            <person name="Meyer V."/>
            <person name="Mirabito P."/>
            <person name="Miskei M."/>
            <person name="Mos M."/>
            <person name="Mullins J."/>
            <person name="Nelson D.R."/>
            <person name="Nielsen J."/>
            <person name="Oakley B.R."/>
            <person name="Osmani S.A."/>
            <person name="Pakula T."/>
            <person name="Paszewski A."/>
            <person name="Paulsen I."/>
            <person name="Pilsyk S."/>
            <person name="Pocsi I."/>
            <person name="Punt P.J."/>
            <person name="Ram A.F."/>
            <person name="Ren Q."/>
            <person name="Robellet X."/>
            <person name="Robson G."/>
            <person name="Seiboth B."/>
            <person name="van Solingen P."/>
            <person name="Specht T."/>
            <person name="Sun J."/>
            <person name="Taheri-Talesh N."/>
            <person name="Takeshita N."/>
            <person name="Ussery D."/>
            <person name="vanKuyk P.A."/>
            <person name="Visser H."/>
            <person name="van de Vondervoort P.J."/>
            <person name="de Vries R.P."/>
            <person name="Walton J."/>
            <person name="Xiang X."/>
            <person name="Xiong Y."/>
            <person name="Zeng A.P."/>
            <person name="Brandt B.W."/>
            <person name="Cornell M.J."/>
            <person name="van den Hondel C.A."/>
            <person name="Visser J."/>
            <person name="Oliver S.G."/>
            <person name="Turner G."/>
        </authorList>
    </citation>
    <scope>GENOME REANNOTATION</scope>
    <source>
        <strain>FGSC A4 / ATCC 38163 / CBS 112.46 / NRRL 194 / M139</strain>
    </source>
</reference>
<reference key="3">
    <citation type="journal article" date="2011" name="Traffic">
        <title>Characterization of Aspergillus nidulans RabC(Rab6).</title>
        <authorList>
            <person name="Pantazopoulou A."/>
            <person name="Penalva M.A."/>
        </authorList>
    </citation>
    <scope>SUBCELLULAR LOCATION</scope>
</reference>
<organism>
    <name type="scientific">Emericella nidulans (strain FGSC A4 / ATCC 38163 / CBS 112.46 / NRRL 194 / M139)</name>
    <name type="common">Aspergillus nidulans</name>
    <dbReference type="NCBI Taxonomy" id="227321"/>
    <lineage>
        <taxon>Eukaryota</taxon>
        <taxon>Fungi</taxon>
        <taxon>Dikarya</taxon>
        <taxon>Ascomycota</taxon>
        <taxon>Pezizomycotina</taxon>
        <taxon>Eurotiomycetes</taxon>
        <taxon>Eurotiomycetidae</taxon>
        <taxon>Eurotiales</taxon>
        <taxon>Aspergillaceae</taxon>
        <taxon>Aspergillus</taxon>
        <taxon>Aspergillus subgen. Nidulantes</taxon>
    </lineage>
</organism>
<protein>
    <recommendedName>
        <fullName>Vacuolar protein sorting/targeting protein 10</fullName>
    </recommendedName>
    <alternativeName>
        <fullName>Carboxypeptidase Y receptor</fullName>
        <shortName>CPY receptor</shortName>
    </alternativeName>
    <alternativeName>
        <fullName>Sortilin vps10</fullName>
    </alternativeName>
    <alternativeName>
        <fullName>Vacuolar carboxypeptidase sorting receptor vps10</fullName>
    </alternativeName>
</protein>
<gene>
    <name type="primary">vps10</name>
    <name type="synonym">vpsT</name>
    <name type="ORF">AN8880</name>
</gene>
<keyword id="KW-0325">Glycoprotein</keyword>
<keyword id="KW-0333">Golgi apparatus</keyword>
<keyword id="KW-0472">Membrane</keyword>
<keyword id="KW-0653">Protein transport</keyword>
<keyword id="KW-0675">Receptor</keyword>
<keyword id="KW-1185">Reference proteome</keyword>
<keyword id="KW-0677">Repeat</keyword>
<keyword id="KW-0732">Signal</keyword>
<keyword id="KW-0812">Transmembrane</keyword>
<keyword id="KW-1133">Transmembrane helix</keyword>
<keyword id="KW-0813">Transport</keyword>